<accession>Q134T7</accession>
<proteinExistence type="inferred from homology"/>
<organism>
    <name type="scientific">Rhodopseudomonas palustris (strain BisB5)</name>
    <dbReference type="NCBI Taxonomy" id="316057"/>
    <lineage>
        <taxon>Bacteria</taxon>
        <taxon>Pseudomonadati</taxon>
        <taxon>Pseudomonadota</taxon>
        <taxon>Alphaproteobacteria</taxon>
        <taxon>Hyphomicrobiales</taxon>
        <taxon>Nitrobacteraceae</taxon>
        <taxon>Rhodopseudomonas</taxon>
    </lineage>
</organism>
<protein>
    <recommendedName>
        <fullName evidence="1">Large ribosomal subunit protein uL29</fullName>
    </recommendedName>
    <alternativeName>
        <fullName evidence="2">50S ribosomal protein L29</fullName>
    </alternativeName>
</protein>
<evidence type="ECO:0000255" key="1">
    <source>
        <dbReference type="HAMAP-Rule" id="MF_00374"/>
    </source>
</evidence>
<evidence type="ECO:0000305" key="2"/>
<dbReference type="EMBL" id="CP000283">
    <property type="protein sequence ID" value="ABE40402.1"/>
    <property type="molecule type" value="Genomic_DNA"/>
</dbReference>
<dbReference type="SMR" id="Q134T7"/>
<dbReference type="STRING" id="316057.RPD_3176"/>
<dbReference type="KEGG" id="rpd:RPD_3176"/>
<dbReference type="eggNOG" id="COG0255">
    <property type="taxonomic scope" value="Bacteria"/>
</dbReference>
<dbReference type="HOGENOM" id="CLU_158491_1_0_5"/>
<dbReference type="BioCyc" id="RPAL316057:RPD_RS15945-MONOMER"/>
<dbReference type="Proteomes" id="UP000001818">
    <property type="component" value="Chromosome"/>
</dbReference>
<dbReference type="GO" id="GO:0022625">
    <property type="term" value="C:cytosolic large ribosomal subunit"/>
    <property type="evidence" value="ECO:0007669"/>
    <property type="project" value="TreeGrafter"/>
</dbReference>
<dbReference type="GO" id="GO:0003735">
    <property type="term" value="F:structural constituent of ribosome"/>
    <property type="evidence" value="ECO:0007669"/>
    <property type="project" value="InterPro"/>
</dbReference>
<dbReference type="GO" id="GO:0006412">
    <property type="term" value="P:translation"/>
    <property type="evidence" value="ECO:0007669"/>
    <property type="project" value="UniProtKB-UniRule"/>
</dbReference>
<dbReference type="CDD" id="cd00427">
    <property type="entry name" value="Ribosomal_L29_HIP"/>
    <property type="match status" value="1"/>
</dbReference>
<dbReference type="FunFam" id="1.10.287.310:FF:000005">
    <property type="entry name" value="50S ribosomal protein L29"/>
    <property type="match status" value="1"/>
</dbReference>
<dbReference type="Gene3D" id="1.10.287.310">
    <property type="match status" value="1"/>
</dbReference>
<dbReference type="HAMAP" id="MF_00374">
    <property type="entry name" value="Ribosomal_uL29"/>
    <property type="match status" value="1"/>
</dbReference>
<dbReference type="InterPro" id="IPR050063">
    <property type="entry name" value="Ribosomal_protein_uL29"/>
</dbReference>
<dbReference type="InterPro" id="IPR001854">
    <property type="entry name" value="Ribosomal_uL29"/>
</dbReference>
<dbReference type="InterPro" id="IPR036049">
    <property type="entry name" value="Ribosomal_uL29_sf"/>
</dbReference>
<dbReference type="NCBIfam" id="TIGR00012">
    <property type="entry name" value="L29"/>
    <property type="match status" value="1"/>
</dbReference>
<dbReference type="PANTHER" id="PTHR10916">
    <property type="entry name" value="60S RIBOSOMAL PROTEIN L35/50S RIBOSOMAL PROTEIN L29"/>
    <property type="match status" value="1"/>
</dbReference>
<dbReference type="PANTHER" id="PTHR10916:SF0">
    <property type="entry name" value="LARGE RIBOSOMAL SUBUNIT PROTEIN UL29C"/>
    <property type="match status" value="1"/>
</dbReference>
<dbReference type="Pfam" id="PF00831">
    <property type="entry name" value="Ribosomal_L29"/>
    <property type="match status" value="1"/>
</dbReference>
<dbReference type="SUPFAM" id="SSF46561">
    <property type="entry name" value="Ribosomal protein L29 (L29p)"/>
    <property type="match status" value="1"/>
</dbReference>
<feature type="chain" id="PRO_1000007583" description="Large ribosomal subunit protein uL29">
    <location>
        <begin position="1"/>
        <end position="69"/>
    </location>
</feature>
<name>RL29_RHOPS</name>
<gene>
    <name evidence="1" type="primary">rpmC</name>
    <name type="ordered locus">RPD_3176</name>
</gene>
<sequence length="69" mass="7981">MAEMKTGDIRAMSDDQMDDAILNLKKERFNLRFQRATGQLEDTSRLREARRDIARIKTIAAQKRAGKTK</sequence>
<comment type="similarity">
    <text evidence="1">Belongs to the universal ribosomal protein uL29 family.</text>
</comment>
<reference key="1">
    <citation type="submission" date="2006-03" db="EMBL/GenBank/DDBJ databases">
        <title>Complete sequence of Rhodopseudomonas palustris BisB5.</title>
        <authorList>
            <consortium name="US DOE Joint Genome Institute"/>
            <person name="Copeland A."/>
            <person name="Lucas S."/>
            <person name="Lapidus A."/>
            <person name="Barry K."/>
            <person name="Detter J.C."/>
            <person name="Glavina del Rio T."/>
            <person name="Hammon N."/>
            <person name="Israni S."/>
            <person name="Dalin E."/>
            <person name="Tice H."/>
            <person name="Pitluck S."/>
            <person name="Chain P."/>
            <person name="Malfatti S."/>
            <person name="Shin M."/>
            <person name="Vergez L."/>
            <person name="Schmutz J."/>
            <person name="Larimer F."/>
            <person name="Land M."/>
            <person name="Hauser L."/>
            <person name="Pelletier D.A."/>
            <person name="Kyrpides N."/>
            <person name="Lykidis A."/>
            <person name="Oda Y."/>
            <person name="Harwood C.S."/>
            <person name="Richardson P."/>
        </authorList>
    </citation>
    <scope>NUCLEOTIDE SEQUENCE [LARGE SCALE GENOMIC DNA]</scope>
    <source>
        <strain>BisB5</strain>
    </source>
</reference>
<keyword id="KW-0687">Ribonucleoprotein</keyword>
<keyword id="KW-0689">Ribosomal protein</keyword>